<gene>
    <name evidence="1" type="primary">rplN</name>
    <name type="ordered locus">BBR47_02310</name>
</gene>
<dbReference type="EMBL" id="AP008955">
    <property type="protein sequence ID" value="BAH41208.1"/>
    <property type="molecule type" value="Genomic_DNA"/>
</dbReference>
<dbReference type="RefSeq" id="WP_012683990.1">
    <property type="nucleotide sequence ID" value="NC_012491.1"/>
</dbReference>
<dbReference type="SMR" id="C0ZIJ0"/>
<dbReference type="STRING" id="358681.BBR47_02310"/>
<dbReference type="GeneID" id="87588861"/>
<dbReference type="KEGG" id="bbe:BBR47_02310"/>
<dbReference type="eggNOG" id="COG0093">
    <property type="taxonomic scope" value="Bacteria"/>
</dbReference>
<dbReference type="HOGENOM" id="CLU_095071_2_1_9"/>
<dbReference type="Proteomes" id="UP000001877">
    <property type="component" value="Chromosome"/>
</dbReference>
<dbReference type="GO" id="GO:0022625">
    <property type="term" value="C:cytosolic large ribosomal subunit"/>
    <property type="evidence" value="ECO:0007669"/>
    <property type="project" value="TreeGrafter"/>
</dbReference>
<dbReference type="GO" id="GO:0070180">
    <property type="term" value="F:large ribosomal subunit rRNA binding"/>
    <property type="evidence" value="ECO:0007669"/>
    <property type="project" value="TreeGrafter"/>
</dbReference>
<dbReference type="GO" id="GO:0003735">
    <property type="term" value="F:structural constituent of ribosome"/>
    <property type="evidence" value="ECO:0007669"/>
    <property type="project" value="InterPro"/>
</dbReference>
<dbReference type="GO" id="GO:0006412">
    <property type="term" value="P:translation"/>
    <property type="evidence" value="ECO:0007669"/>
    <property type="project" value="UniProtKB-UniRule"/>
</dbReference>
<dbReference type="CDD" id="cd00337">
    <property type="entry name" value="Ribosomal_uL14"/>
    <property type="match status" value="1"/>
</dbReference>
<dbReference type="FunFam" id="2.40.150.20:FF:000001">
    <property type="entry name" value="50S ribosomal protein L14"/>
    <property type="match status" value="1"/>
</dbReference>
<dbReference type="Gene3D" id="2.40.150.20">
    <property type="entry name" value="Ribosomal protein L14"/>
    <property type="match status" value="1"/>
</dbReference>
<dbReference type="HAMAP" id="MF_01367">
    <property type="entry name" value="Ribosomal_uL14"/>
    <property type="match status" value="1"/>
</dbReference>
<dbReference type="InterPro" id="IPR000218">
    <property type="entry name" value="Ribosomal_uL14"/>
</dbReference>
<dbReference type="InterPro" id="IPR005745">
    <property type="entry name" value="Ribosomal_uL14_bac-type"/>
</dbReference>
<dbReference type="InterPro" id="IPR019972">
    <property type="entry name" value="Ribosomal_uL14_CS"/>
</dbReference>
<dbReference type="InterPro" id="IPR036853">
    <property type="entry name" value="Ribosomal_uL14_sf"/>
</dbReference>
<dbReference type="NCBIfam" id="TIGR01067">
    <property type="entry name" value="rplN_bact"/>
    <property type="match status" value="1"/>
</dbReference>
<dbReference type="PANTHER" id="PTHR11761">
    <property type="entry name" value="50S/60S RIBOSOMAL PROTEIN L14/L23"/>
    <property type="match status" value="1"/>
</dbReference>
<dbReference type="PANTHER" id="PTHR11761:SF3">
    <property type="entry name" value="LARGE RIBOSOMAL SUBUNIT PROTEIN UL14M"/>
    <property type="match status" value="1"/>
</dbReference>
<dbReference type="Pfam" id="PF00238">
    <property type="entry name" value="Ribosomal_L14"/>
    <property type="match status" value="1"/>
</dbReference>
<dbReference type="SMART" id="SM01374">
    <property type="entry name" value="Ribosomal_L14"/>
    <property type="match status" value="1"/>
</dbReference>
<dbReference type="SUPFAM" id="SSF50193">
    <property type="entry name" value="Ribosomal protein L14"/>
    <property type="match status" value="1"/>
</dbReference>
<dbReference type="PROSITE" id="PS00049">
    <property type="entry name" value="RIBOSOMAL_L14"/>
    <property type="match status" value="1"/>
</dbReference>
<accession>C0ZIJ0</accession>
<proteinExistence type="inferred from homology"/>
<feature type="chain" id="PRO_1000166903" description="Large ribosomal subunit protein uL14">
    <location>
        <begin position="1"/>
        <end position="122"/>
    </location>
</feature>
<name>RL14_BREBN</name>
<keyword id="KW-1185">Reference proteome</keyword>
<keyword id="KW-0687">Ribonucleoprotein</keyword>
<keyword id="KW-0689">Ribosomal protein</keyword>
<keyword id="KW-0694">RNA-binding</keyword>
<keyword id="KW-0699">rRNA-binding</keyword>
<protein>
    <recommendedName>
        <fullName evidence="1">Large ribosomal subunit protein uL14</fullName>
    </recommendedName>
    <alternativeName>
        <fullName evidence="2">50S ribosomal protein L14</fullName>
    </alternativeName>
</protein>
<reference key="1">
    <citation type="submission" date="2005-03" db="EMBL/GenBank/DDBJ databases">
        <title>Brevibacillus brevis strain 47, complete genome.</title>
        <authorList>
            <person name="Hosoyama A."/>
            <person name="Yamada R."/>
            <person name="Hongo Y."/>
            <person name="Terui Y."/>
            <person name="Ankai A."/>
            <person name="Masuyama W."/>
            <person name="Sekiguchi M."/>
            <person name="Takeda T."/>
            <person name="Asano K."/>
            <person name="Ohji S."/>
            <person name="Ichikawa N."/>
            <person name="Narita S."/>
            <person name="Aoki N."/>
            <person name="Miura H."/>
            <person name="Matsushita S."/>
            <person name="Sekigawa T."/>
            <person name="Yamagata H."/>
            <person name="Yoshikawa H."/>
            <person name="Udaka S."/>
            <person name="Tanikawa S."/>
            <person name="Fujita N."/>
        </authorList>
    </citation>
    <scope>NUCLEOTIDE SEQUENCE [LARGE SCALE GENOMIC DNA]</scope>
    <source>
        <strain>47 / JCM 6285 / NBRC 100599</strain>
    </source>
</reference>
<organism>
    <name type="scientific">Brevibacillus brevis (strain 47 / JCM 6285 / NBRC 100599)</name>
    <dbReference type="NCBI Taxonomy" id="358681"/>
    <lineage>
        <taxon>Bacteria</taxon>
        <taxon>Bacillati</taxon>
        <taxon>Bacillota</taxon>
        <taxon>Bacilli</taxon>
        <taxon>Bacillales</taxon>
        <taxon>Paenibacillaceae</taxon>
        <taxon>Brevibacillus</taxon>
    </lineage>
</organism>
<evidence type="ECO:0000255" key="1">
    <source>
        <dbReference type="HAMAP-Rule" id="MF_01367"/>
    </source>
</evidence>
<evidence type="ECO:0000305" key="2"/>
<sequence>MIQTQTRLAVADNSGAKELMCIKVLGGSGRKTANIGDVIVCSVKSATPGGVVKKGQVVKAVVVRTVSGVRRNDGSYIRFDENAAVVIKDDQSPRGTRIFGPVARELRDKDFMKIISLAPEVI</sequence>
<comment type="function">
    <text evidence="1">Binds to 23S rRNA. Forms part of two intersubunit bridges in the 70S ribosome.</text>
</comment>
<comment type="subunit">
    <text evidence="1">Part of the 50S ribosomal subunit. Forms a cluster with proteins L3 and L19. In the 70S ribosome, L14 and L19 interact and together make contacts with the 16S rRNA in bridges B5 and B8.</text>
</comment>
<comment type="similarity">
    <text evidence="1">Belongs to the universal ribosomal protein uL14 family.</text>
</comment>